<evidence type="ECO:0000255" key="1">
    <source>
        <dbReference type="HAMAP-Rule" id="MF_00373"/>
    </source>
</evidence>
<evidence type="ECO:0000305" key="2"/>
<accession>Q1CU38</accession>
<gene>
    <name evidence="1" type="primary">rpmB</name>
    <name type="ordered locus">HPAG1_0467</name>
</gene>
<protein>
    <recommendedName>
        <fullName evidence="1">Large ribosomal subunit protein bL28</fullName>
    </recommendedName>
    <alternativeName>
        <fullName evidence="2">50S ribosomal protein L28</fullName>
    </alternativeName>
</protein>
<reference key="1">
    <citation type="journal article" date="2006" name="Proc. Natl. Acad. Sci. U.S.A.">
        <title>The complete genome sequence of a chronic atrophic gastritis Helicobacter pylori strain: evolution during disease progression.</title>
        <authorList>
            <person name="Oh J.D."/>
            <person name="Kling-Baeckhed H."/>
            <person name="Giannakis M."/>
            <person name="Xu J."/>
            <person name="Fulton R.S."/>
            <person name="Fulton L.A."/>
            <person name="Cordum H.S."/>
            <person name="Wang C."/>
            <person name="Elliott G."/>
            <person name="Edwards J."/>
            <person name="Mardis E.R."/>
            <person name="Engstrand L.G."/>
            <person name="Gordon J.I."/>
        </authorList>
    </citation>
    <scope>NUCLEOTIDE SEQUENCE [LARGE SCALE GENOMIC DNA]</scope>
    <source>
        <strain>HPAG1</strain>
    </source>
</reference>
<sequence length="62" mass="6889">MAKRCALTFKGPMVGNHVSHANNKNKRRSLPNLRSIKIQLDDGTTKRIKVAASTLRTMRKGA</sequence>
<comment type="similarity">
    <text evidence="1">Belongs to the bacterial ribosomal protein bL28 family.</text>
</comment>
<feature type="chain" id="PRO_1000007253" description="Large ribosomal subunit protein bL28">
    <location>
        <begin position="1"/>
        <end position="62"/>
    </location>
</feature>
<proteinExistence type="inferred from homology"/>
<keyword id="KW-0687">Ribonucleoprotein</keyword>
<keyword id="KW-0689">Ribosomal protein</keyword>
<name>RL28_HELPH</name>
<dbReference type="EMBL" id="CP000241">
    <property type="protein sequence ID" value="ABF84534.1"/>
    <property type="molecule type" value="Genomic_DNA"/>
</dbReference>
<dbReference type="RefSeq" id="WP_001119002.1">
    <property type="nucleotide sequence ID" value="NC_008086.1"/>
</dbReference>
<dbReference type="SMR" id="Q1CU38"/>
<dbReference type="KEGG" id="hpa:HPAG1_0467"/>
<dbReference type="HOGENOM" id="CLU_064548_7_2_7"/>
<dbReference type="GO" id="GO:1990904">
    <property type="term" value="C:ribonucleoprotein complex"/>
    <property type="evidence" value="ECO:0007669"/>
    <property type="project" value="UniProtKB-KW"/>
</dbReference>
<dbReference type="GO" id="GO:0005840">
    <property type="term" value="C:ribosome"/>
    <property type="evidence" value="ECO:0007669"/>
    <property type="project" value="UniProtKB-KW"/>
</dbReference>
<dbReference type="GO" id="GO:0003735">
    <property type="term" value="F:structural constituent of ribosome"/>
    <property type="evidence" value="ECO:0007669"/>
    <property type="project" value="InterPro"/>
</dbReference>
<dbReference type="GO" id="GO:0006412">
    <property type="term" value="P:translation"/>
    <property type="evidence" value="ECO:0007669"/>
    <property type="project" value="UniProtKB-UniRule"/>
</dbReference>
<dbReference type="Gene3D" id="2.30.170.40">
    <property type="entry name" value="Ribosomal protein L28/L24"/>
    <property type="match status" value="1"/>
</dbReference>
<dbReference type="HAMAP" id="MF_00373">
    <property type="entry name" value="Ribosomal_bL28"/>
    <property type="match status" value="1"/>
</dbReference>
<dbReference type="InterPro" id="IPR050096">
    <property type="entry name" value="Bacterial_rp_bL28"/>
</dbReference>
<dbReference type="InterPro" id="IPR026569">
    <property type="entry name" value="Ribosomal_bL28"/>
</dbReference>
<dbReference type="InterPro" id="IPR034704">
    <property type="entry name" value="Ribosomal_bL28/bL31-like_sf"/>
</dbReference>
<dbReference type="InterPro" id="IPR001383">
    <property type="entry name" value="Ribosomal_bL28_bact-type"/>
</dbReference>
<dbReference type="InterPro" id="IPR037147">
    <property type="entry name" value="Ribosomal_bL28_sf"/>
</dbReference>
<dbReference type="NCBIfam" id="TIGR00009">
    <property type="entry name" value="L28"/>
    <property type="match status" value="1"/>
</dbReference>
<dbReference type="PANTHER" id="PTHR39080">
    <property type="entry name" value="50S RIBOSOMAL PROTEIN L28"/>
    <property type="match status" value="1"/>
</dbReference>
<dbReference type="PANTHER" id="PTHR39080:SF1">
    <property type="entry name" value="LARGE RIBOSOMAL SUBUNIT PROTEIN BL28A"/>
    <property type="match status" value="1"/>
</dbReference>
<dbReference type="Pfam" id="PF00830">
    <property type="entry name" value="Ribosomal_L28"/>
    <property type="match status" value="1"/>
</dbReference>
<dbReference type="SUPFAM" id="SSF143800">
    <property type="entry name" value="L28p-like"/>
    <property type="match status" value="1"/>
</dbReference>
<organism>
    <name type="scientific">Helicobacter pylori (strain HPAG1)</name>
    <dbReference type="NCBI Taxonomy" id="357544"/>
    <lineage>
        <taxon>Bacteria</taxon>
        <taxon>Pseudomonadati</taxon>
        <taxon>Campylobacterota</taxon>
        <taxon>Epsilonproteobacteria</taxon>
        <taxon>Campylobacterales</taxon>
        <taxon>Helicobacteraceae</taxon>
        <taxon>Helicobacter</taxon>
    </lineage>
</organism>